<gene>
    <name type="primary">tmem200a</name>
    <name type="ORF">si:ch211-45m15.5</name>
</gene>
<protein>
    <recommendedName>
        <fullName>Transmembrane protein 200A</fullName>
    </recommendedName>
</protein>
<proteinExistence type="inferred from homology"/>
<reference key="1">
    <citation type="journal article" date="2013" name="Nature">
        <title>The zebrafish reference genome sequence and its relationship to the human genome.</title>
        <authorList>
            <person name="Howe K."/>
            <person name="Clark M.D."/>
            <person name="Torroja C.F."/>
            <person name="Torrance J."/>
            <person name="Berthelot C."/>
            <person name="Muffato M."/>
            <person name="Collins J.E."/>
            <person name="Humphray S."/>
            <person name="McLaren K."/>
            <person name="Matthews L."/>
            <person name="McLaren S."/>
            <person name="Sealy I."/>
            <person name="Caccamo M."/>
            <person name="Churcher C."/>
            <person name="Scott C."/>
            <person name="Barrett J.C."/>
            <person name="Koch R."/>
            <person name="Rauch G.J."/>
            <person name="White S."/>
            <person name="Chow W."/>
            <person name="Kilian B."/>
            <person name="Quintais L.T."/>
            <person name="Guerra-Assuncao J.A."/>
            <person name="Zhou Y."/>
            <person name="Gu Y."/>
            <person name="Yen J."/>
            <person name="Vogel J.H."/>
            <person name="Eyre T."/>
            <person name="Redmond S."/>
            <person name="Banerjee R."/>
            <person name="Chi J."/>
            <person name="Fu B."/>
            <person name="Langley E."/>
            <person name="Maguire S.F."/>
            <person name="Laird G.K."/>
            <person name="Lloyd D."/>
            <person name="Kenyon E."/>
            <person name="Donaldson S."/>
            <person name="Sehra H."/>
            <person name="Almeida-King J."/>
            <person name="Loveland J."/>
            <person name="Trevanion S."/>
            <person name="Jones M."/>
            <person name="Quail M."/>
            <person name="Willey D."/>
            <person name="Hunt A."/>
            <person name="Burton J."/>
            <person name="Sims S."/>
            <person name="McLay K."/>
            <person name="Plumb B."/>
            <person name="Davis J."/>
            <person name="Clee C."/>
            <person name="Oliver K."/>
            <person name="Clark R."/>
            <person name="Riddle C."/>
            <person name="Elliot D."/>
            <person name="Threadgold G."/>
            <person name="Harden G."/>
            <person name="Ware D."/>
            <person name="Begum S."/>
            <person name="Mortimore B."/>
            <person name="Kerry G."/>
            <person name="Heath P."/>
            <person name="Phillimore B."/>
            <person name="Tracey A."/>
            <person name="Corby N."/>
            <person name="Dunn M."/>
            <person name="Johnson C."/>
            <person name="Wood J."/>
            <person name="Clark S."/>
            <person name="Pelan S."/>
            <person name="Griffiths G."/>
            <person name="Smith M."/>
            <person name="Glithero R."/>
            <person name="Howden P."/>
            <person name="Barker N."/>
            <person name="Lloyd C."/>
            <person name="Stevens C."/>
            <person name="Harley J."/>
            <person name="Holt K."/>
            <person name="Panagiotidis G."/>
            <person name="Lovell J."/>
            <person name="Beasley H."/>
            <person name="Henderson C."/>
            <person name="Gordon D."/>
            <person name="Auger K."/>
            <person name="Wright D."/>
            <person name="Collins J."/>
            <person name="Raisen C."/>
            <person name="Dyer L."/>
            <person name="Leung K."/>
            <person name="Robertson L."/>
            <person name="Ambridge K."/>
            <person name="Leongamornlert D."/>
            <person name="McGuire S."/>
            <person name="Gilderthorp R."/>
            <person name="Griffiths C."/>
            <person name="Manthravadi D."/>
            <person name="Nichol S."/>
            <person name="Barker G."/>
            <person name="Whitehead S."/>
            <person name="Kay M."/>
            <person name="Brown J."/>
            <person name="Murnane C."/>
            <person name="Gray E."/>
            <person name="Humphries M."/>
            <person name="Sycamore N."/>
            <person name="Barker D."/>
            <person name="Saunders D."/>
            <person name="Wallis J."/>
            <person name="Babbage A."/>
            <person name="Hammond S."/>
            <person name="Mashreghi-Mohammadi M."/>
            <person name="Barr L."/>
            <person name="Martin S."/>
            <person name="Wray P."/>
            <person name="Ellington A."/>
            <person name="Matthews N."/>
            <person name="Ellwood M."/>
            <person name="Woodmansey R."/>
            <person name="Clark G."/>
            <person name="Cooper J."/>
            <person name="Tromans A."/>
            <person name="Grafham D."/>
            <person name="Skuce C."/>
            <person name="Pandian R."/>
            <person name="Andrews R."/>
            <person name="Harrison E."/>
            <person name="Kimberley A."/>
            <person name="Garnett J."/>
            <person name="Fosker N."/>
            <person name="Hall R."/>
            <person name="Garner P."/>
            <person name="Kelly D."/>
            <person name="Bird C."/>
            <person name="Palmer S."/>
            <person name="Gehring I."/>
            <person name="Berger A."/>
            <person name="Dooley C.M."/>
            <person name="Ersan-Urun Z."/>
            <person name="Eser C."/>
            <person name="Geiger H."/>
            <person name="Geisler M."/>
            <person name="Karotki L."/>
            <person name="Kirn A."/>
            <person name="Konantz J."/>
            <person name="Konantz M."/>
            <person name="Oberlander M."/>
            <person name="Rudolph-Geiger S."/>
            <person name="Teucke M."/>
            <person name="Lanz C."/>
            <person name="Raddatz G."/>
            <person name="Osoegawa K."/>
            <person name="Zhu B."/>
            <person name="Rapp A."/>
            <person name="Widaa S."/>
            <person name="Langford C."/>
            <person name="Yang F."/>
            <person name="Schuster S.C."/>
            <person name="Carter N.P."/>
            <person name="Harrow J."/>
            <person name="Ning Z."/>
            <person name="Herrero J."/>
            <person name="Searle S.M."/>
            <person name="Enright A."/>
            <person name="Geisler R."/>
            <person name="Plasterk R.H."/>
            <person name="Lee C."/>
            <person name="Westerfield M."/>
            <person name="de Jong P.J."/>
            <person name="Zon L.I."/>
            <person name="Postlethwait J.H."/>
            <person name="Nusslein-Volhard C."/>
            <person name="Hubbard T.J."/>
            <person name="Roest Crollius H."/>
            <person name="Rogers J."/>
            <person name="Stemple D.L."/>
        </authorList>
    </citation>
    <scope>NUCLEOTIDE SEQUENCE [LARGE SCALE GENOMIC DNA]</scope>
    <source>
        <strain>Tuebingen</strain>
    </source>
</reference>
<keyword id="KW-0325">Glycoprotein</keyword>
<keyword id="KW-0472">Membrane</keyword>
<keyword id="KW-1185">Reference proteome</keyword>
<keyword id="KW-0812">Transmembrane</keyword>
<keyword id="KW-1133">Transmembrane helix</keyword>
<dbReference type="EMBL" id="BX681416">
    <property type="protein sequence ID" value="CAI12010.1"/>
    <property type="molecule type" value="Genomic_DNA"/>
</dbReference>
<dbReference type="RefSeq" id="NP_001038265.1">
    <property type="nucleotide sequence ID" value="NM_001044800.1"/>
</dbReference>
<dbReference type="RefSeq" id="XP_005160389.1">
    <property type="nucleotide sequence ID" value="XM_005160332.5"/>
</dbReference>
<dbReference type="RefSeq" id="XP_009292791.1">
    <property type="nucleotide sequence ID" value="XM_009294516.4"/>
</dbReference>
<dbReference type="RefSeq" id="XP_021324099.1">
    <property type="nucleotide sequence ID" value="XM_021468424.2"/>
</dbReference>
<dbReference type="RefSeq" id="XP_021324100.1">
    <property type="nucleotide sequence ID" value="XM_021468425.2"/>
</dbReference>
<dbReference type="RefSeq" id="XP_068071552.1">
    <property type="nucleotide sequence ID" value="XM_068215451.1"/>
</dbReference>
<dbReference type="FunCoup" id="Q5RGQ8">
    <property type="interactions" value="1225"/>
</dbReference>
<dbReference type="STRING" id="7955.ENSDARP00000126735"/>
<dbReference type="GlyCosmos" id="Q5RGQ8">
    <property type="glycosylation" value="1 site, No reported glycans"/>
</dbReference>
<dbReference type="PaxDb" id="7955-ENSDARP00000126735"/>
<dbReference type="Ensembl" id="ENSDART00000041250">
    <property type="protein sequence ID" value="ENSDARP00000041249"/>
    <property type="gene ID" value="ENSDARG00000031540"/>
</dbReference>
<dbReference type="Ensembl" id="ENSDART00000152321">
    <property type="protein sequence ID" value="ENSDARP00000126735"/>
    <property type="gene ID" value="ENSDARG00000031540"/>
</dbReference>
<dbReference type="GeneID" id="556369"/>
<dbReference type="KEGG" id="dre:556369"/>
<dbReference type="AGR" id="ZFIN:ZDB-GENE-040724-81"/>
<dbReference type="CTD" id="114801"/>
<dbReference type="ZFIN" id="ZDB-GENE-040724-81">
    <property type="gene designation" value="tmem200a"/>
</dbReference>
<dbReference type="eggNOG" id="KOG4823">
    <property type="taxonomic scope" value="Eukaryota"/>
</dbReference>
<dbReference type="HOGENOM" id="CLU_030031_0_0_1"/>
<dbReference type="InParanoid" id="Q5RGQ8"/>
<dbReference type="OMA" id="FQPVSTM"/>
<dbReference type="OrthoDB" id="9994280at2759"/>
<dbReference type="PhylomeDB" id="Q5RGQ8"/>
<dbReference type="TreeFam" id="TF332635"/>
<dbReference type="PRO" id="PR:Q5RGQ8"/>
<dbReference type="Proteomes" id="UP000000437">
    <property type="component" value="Chromosome 20"/>
</dbReference>
<dbReference type="Bgee" id="ENSDARG00000031540">
    <property type="expression patterns" value="Expressed in ganglionic layer of retina and 7 other cell types or tissues"/>
</dbReference>
<dbReference type="ExpressionAtlas" id="Q5RGQ8">
    <property type="expression patterns" value="baseline and differential"/>
</dbReference>
<dbReference type="GO" id="GO:0016020">
    <property type="term" value="C:membrane"/>
    <property type="evidence" value="ECO:0007669"/>
    <property type="project" value="UniProtKB-SubCell"/>
</dbReference>
<dbReference type="InterPro" id="IPR018787">
    <property type="entry name" value="DUF2371_TMEM200"/>
</dbReference>
<dbReference type="PANTHER" id="PTHR31815">
    <property type="entry name" value="AGAP005329-PA"/>
    <property type="match status" value="1"/>
</dbReference>
<dbReference type="PANTHER" id="PTHR31815:SF0">
    <property type="entry name" value="TRANSMEMBRANE PROTEIN 200A"/>
    <property type="match status" value="1"/>
</dbReference>
<dbReference type="Pfam" id="PF10177">
    <property type="entry name" value="DUF2371"/>
    <property type="match status" value="1"/>
</dbReference>
<feature type="chain" id="PRO_0000294342" description="Transmembrane protein 200A">
    <location>
        <begin position="1"/>
        <end position="497"/>
    </location>
</feature>
<feature type="topological domain" description="Cytoplasmic" evidence="1">
    <location>
        <begin position="1"/>
        <end position="61"/>
    </location>
</feature>
<feature type="transmembrane region" description="Helical" evidence="1">
    <location>
        <begin position="62"/>
        <end position="82"/>
    </location>
</feature>
<feature type="topological domain" description="Extracellular" evidence="1">
    <location>
        <begin position="83"/>
        <end position="127"/>
    </location>
</feature>
<feature type="transmembrane region" description="Helical" evidence="1">
    <location>
        <begin position="128"/>
        <end position="148"/>
    </location>
</feature>
<feature type="topological domain" description="Cytoplasmic" evidence="1">
    <location>
        <begin position="149"/>
        <end position="497"/>
    </location>
</feature>
<feature type="region of interest" description="Disordered" evidence="2">
    <location>
        <begin position="20"/>
        <end position="44"/>
    </location>
</feature>
<feature type="region of interest" description="Disordered" evidence="2">
    <location>
        <begin position="353"/>
        <end position="385"/>
    </location>
</feature>
<feature type="region of interest" description="Disordered" evidence="2">
    <location>
        <begin position="400"/>
        <end position="438"/>
    </location>
</feature>
<feature type="compositionally biased region" description="Polar residues" evidence="2">
    <location>
        <begin position="20"/>
        <end position="30"/>
    </location>
</feature>
<feature type="compositionally biased region" description="Low complexity" evidence="2">
    <location>
        <begin position="353"/>
        <end position="375"/>
    </location>
</feature>
<feature type="compositionally biased region" description="Basic and acidic residues" evidence="2">
    <location>
        <begin position="427"/>
        <end position="438"/>
    </location>
</feature>
<feature type="glycosylation site" description="N-linked (GlcNAc...) asparagine" evidence="1">
    <location>
        <position position="100"/>
    </location>
</feature>
<comment type="subcellular location">
    <subcellularLocation>
        <location evidence="3">Membrane</location>
        <topology evidence="3">Multi-pass membrane protein</topology>
    </subcellularLocation>
</comment>
<comment type="similarity">
    <text evidence="3">Belongs to the TMEM200 family.</text>
</comment>
<accession>Q5RGQ8</accession>
<sequence>MIATGGVITGLAALKRQDSTRSQYHLSAQSPGPAPEKKTTKRKPRADVVVVRGKIRLYSASGFFLVLGVLILMAGIAMAVLGYWPHKDQPKAPETKMSANNTQSFGREQAGSIAQFLEQHMHSEKMKMLGPFTMGIGIFIFICANAILHENRDRETKVIHMRDMYSTVIDIHSLRIKEQKCTNGACMGPYGGDTEIRTFGLDSQFASRLAANTLMSFSGLDGDVRFSHRTSSADDDDGLMSEARGGFCLLSPTYKDRSECIFGFQDDGRWEDRRGALKKCQTRSIVSSSISAFTLPVIKLNNCVIDEPDIDSITEDLEQSRVHSRPPSMESLTVPVPDIAKAFKPPGVQLLRSNSATESASSTSSRSSLSPGSTSGRFLSPGAARKDFGSNNSIHMLSAHSKSLDLERGPTKLTVQPEQRKHPSWPRLDRSNSKGYTRLENKEDPMDRLIVPPVDVKKDYTKKEKLLMISRSHNNLSFEHDEFMSSGLKRGTSETRF</sequence>
<evidence type="ECO:0000255" key="1"/>
<evidence type="ECO:0000256" key="2">
    <source>
        <dbReference type="SAM" id="MobiDB-lite"/>
    </source>
</evidence>
<evidence type="ECO:0000305" key="3"/>
<organism>
    <name type="scientific">Danio rerio</name>
    <name type="common">Zebrafish</name>
    <name type="synonym">Brachydanio rerio</name>
    <dbReference type="NCBI Taxonomy" id="7955"/>
    <lineage>
        <taxon>Eukaryota</taxon>
        <taxon>Metazoa</taxon>
        <taxon>Chordata</taxon>
        <taxon>Craniata</taxon>
        <taxon>Vertebrata</taxon>
        <taxon>Euteleostomi</taxon>
        <taxon>Actinopterygii</taxon>
        <taxon>Neopterygii</taxon>
        <taxon>Teleostei</taxon>
        <taxon>Ostariophysi</taxon>
        <taxon>Cypriniformes</taxon>
        <taxon>Danionidae</taxon>
        <taxon>Danioninae</taxon>
        <taxon>Danio</taxon>
    </lineage>
</organism>
<name>T200A_DANRE</name>